<dbReference type="EC" id="1.14.99.29" evidence="2 3"/>
<dbReference type="EMBL" id="AAFI02000009">
    <property type="protein sequence ID" value="EAL70954.1"/>
    <property type="molecule type" value="Genomic_DNA"/>
</dbReference>
<dbReference type="EMBL" id="AAFI02000011">
    <property type="protein sequence ID" value="EAL70473.1"/>
    <property type="molecule type" value="Genomic_DNA"/>
</dbReference>
<dbReference type="RefSeq" id="XP_644398.1">
    <property type="nucleotide sequence ID" value="XM_639306.1"/>
</dbReference>
<dbReference type="RefSeq" id="XP_645015.1">
    <property type="nucleotide sequence ID" value="XM_639923.1"/>
</dbReference>
<dbReference type="SMR" id="Q556G4"/>
<dbReference type="FunCoup" id="Q556G4">
    <property type="interactions" value="664"/>
</dbReference>
<dbReference type="STRING" id="44689.Q556G4"/>
<dbReference type="PaxDb" id="44689-DDB0233909"/>
<dbReference type="EnsemblProtists" id="EAL70473">
    <property type="protein sequence ID" value="EAL70473"/>
    <property type="gene ID" value="DDB_G0274079"/>
</dbReference>
<dbReference type="EnsemblProtists" id="EAL70954">
    <property type="protein sequence ID" value="EAL70954"/>
    <property type="gene ID" value="DDB_G0272634"/>
</dbReference>
<dbReference type="GeneID" id="8618692"/>
<dbReference type="GeneID" id="8619284"/>
<dbReference type="KEGG" id="ddi:DDB_G0272634"/>
<dbReference type="KEGG" id="ddi:DDB_G0274079"/>
<dbReference type="dictyBase" id="DDB_G0272634">
    <property type="gene designation" value="dohh-1"/>
</dbReference>
<dbReference type="dictyBase" id="DDB_G0274079">
    <property type="gene designation" value="dohh-2"/>
</dbReference>
<dbReference type="VEuPathDB" id="AmoebaDB:DDB_G0274079"/>
<dbReference type="eggNOG" id="KOG0567">
    <property type="taxonomic scope" value="Eukaryota"/>
</dbReference>
<dbReference type="HOGENOM" id="CLU_053974_0_0_1"/>
<dbReference type="InParanoid" id="Q556G4"/>
<dbReference type="OMA" id="LQEPCSI"/>
<dbReference type="PhylomeDB" id="Q556G4"/>
<dbReference type="Reactome" id="R-DDI-204626">
    <property type="pathway name" value="Hypusine synthesis from eIF5A-lysine"/>
</dbReference>
<dbReference type="UniPathway" id="UPA00354"/>
<dbReference type="PRO" id="PR:Q556G4"/>
<dbReference type="Proteomes" id="UP000002195">
    <property type="component" value="Chromosome 2"/>
</dbReference>
<dbReference type="GO" id="GO:0019135">
    <property type="term" value="F:deoxyhypusine monooxygenase activity"/>
    <property type="evidence" value="ECO:0000250"/>
    <property type="project" value="dictyBase"/>
</dbReference>
<dbReference type="GO" id="GO:0005506">
    <property type="term" value="F:iron ion binding"/>
    <property type="evidence" value="ECO:0000250"/>
    <property type="project" value="UniProtKB"/>
</dbReference>
<dbReference type="GO" id="GO:0016491">
    <property type="term" value="F:oxidoreductase activity"/>
    <property type="evidence" value="ECO:0000318"/>
    <property type="project" value="GO_Central"/>
</dbReference>
<dbReference type="GO" id="GO:0008612">
    <property type="term" value="P:peptidyl-lysine modification to peptidyl-hypusine"/>
    <property type="evidence" value="ECO:0000250"/>
    <property type="project" value="dictyBase"/>
</dbReference>
<dbReference type="FunFam" id="1.25.10.10:FF:000099">
    <property type="entry name" value="Deoxyhypusine hydroxylase"/>
    <property type="match status" value="1"/>
</dbReference>
<dbReference type="Gene3D" id="1.25.10.10">
    <property type="entry name" value="Leucine-rich Repeat Variant"/>
    <property type="match status" value="2"/>
</dbReference>
<dbReference type="HAMAP" id="MF_03101">
    <property type="entry name" value="Deoxyhypusine_hydroxylase"/>
    <property type="match status" value="1"/>
</dbReference>
<dbReference type="InterPro" id="IPR011989">
    <property type="entry name" value="ARM-like"/>
</dbReference>
<dbReference type="InterPro" id="IPR016024">
    <property type="entry name" value="ARM-type_fold"/>
</dbReference>
<dbReference type="InterPro" id="IPR027517">
    <property type="entry name" value="Deoxyhypusine_hydroxylase"/>
</dbReference>
<dbReference type="InterPro" id="IPR004155">
    <property type="entry name" value="PBS_lyase_HEAT"/>
</dbReference>
<dbReference type="PANTHER" id="PTHR12697:SF5">
    <property type="entry name" value="DEOXYHYPUSINE HYDROXYLASE"/>
    <property type="match status" value="1"/>
</dbReference>
<dbReference type="PANTHER" id="PTHR12697">
    <property type="entry name" value="PBS LYASE HEAT-LIKE PROTEIN"/>
    <property type="match status" value="1"/>
</dbReference>
<dbReference type="Pfam" id="PF13646">
    <property type="entry name" value="HEAT_2"/>
    <property type="match status" value="2"/>
</dbReference>
<dbReference type="SMART" id="SM00567">
    <property type="entry name" value="EZ_HEAT"/>
    <property type="match status" value="6"/>
</dbReference>
<dbReference type="SUPFAM" id="SSF48371">
    <property type="entry name" value="ARM repeat"/>
    <property type="match status" value="1"/>
</dbReference>
<sequence>MVVVTEEIVNGLKETLTDVSQPIAKRFRSLFTLRNLNGPLCIDAMASALNDKSALLRHEIAYCLGQMEDEYALKVLIDLVKNSDEHPMVRHEAAEALGAIGSESAHKTLKEYSNDPVREVSETCQLALSRVEWYEKNKPETEEDKMYMSVDPAPPLKKGSVSRDELRSKFLDSNLDIFNRYRALFSLRDIGDEQSVLALCDGLKDQSSALLRHEVAFVLGQLQHRVAIDPLTTCVLDESENAMVRHEAAEALGAIASTETIPLLEKLLQDKEPIVSESCAVALDVTEYFNNTESFQYADGIKILLEKNLVDQQQK</sequence>
<feature type="chain" id="PRO_0000326491" description="Deoxyhypusine hydroxylase">
    <location>
        <begin position="1"/>
        <end position="315"/>
    </location>
</feature>
<feature type="repeat" description="HEAT-like PBS-type 1">
    <location>
        <begin position="23"/>
        <end position="52"/>
    </location>
</feature>
<feature type="repeat" description="HEAT-like PBS-type 2">
    <location>
        <begin position="56"/>
        <end position="82"/>
    </location>
</feature>
<feature type="repeat" description="HEAT-like PBS-type 3">
    <location>
        <begin position="89"/>
        <end position="115"/>
    </location>
</feature>
<feature type="repeat" description="HEAT-like PBS-type 4">
    <location>
        <begin position="179"/>
        <end position="205"/>
    </location>
</feature>
<feature type="repeat" description="HEAT-like PBS-type 5">
    <location>
        <begin position="211"/>
        <end position="237"/>
    </location>
</feature>
<feature type="repeat" description="HEAT-like PBS-type 6">
    <location>
        <begin position="244"/>
        <end position="270"/>
    </location>
</feature>
<feature type="binding site" evidence="2 3">
    <location>
        <position position="58"/>
    </location>
    <ligand>
        <name>Fe cation</name>
        <dbReference type="ChEBI" id="CHEBI:24875"/>
        <label>1</label>
    </ligand>
</feature>
<feature type="binding site" evidence="2 3">
    <location>
        <position position="91"/>
    </location>
    <ligand>
        <name>Fe cation</name>
        <dbReference type="ChEBI" id="CHEBI:24875"/>
        <label>2</label>
    </ligand>
</feature>
<feature type="binding site" evidence="2 3">
    <location>
        <position position="92"/>
    </location>
    <ligand>
        <name>Fe cation</name>
        <dbReference type="ChEBI" id="CHEBI:24875"/>
        <label>2</label>
    </ligand>
</feature>
<feature type="binding site" evidence="2 3">
    <location>
        <position position="213"/>
    </location>
    <ligand>
        <name>Fe cation</name>
        <dbReference type="ChEBI" id="CHEBI:24875"/>
        <label>2</label>
    </ligand>
</feature>
<feature type="binding site" evidence="2 3">
    <location>
        <position position="246"/>
    </location>
    <ligand>
        <name>Fe cation</name>
        <dbReference type="ChEBI" id="CHEBI:24875"/>
        <label>1</label>
    </ligand>
</feature>
<feature type="binding site" evidence="2 3">
    <location>
        <position position="247"/>
    </location>
    <ligand>
        <name>Fe cation</name>
        <dbReference type="ChEBI" id="CHEBI:24875"/>
        <label>1</label>
    </ligand>
</feature>
<name>DOHH_DICDI</name>
<reference key="1">
    <citation type="journal article" date="2002" name="Nature">
        <title>Sequence and analysis of chromosome 2 of Dictyostelium discoideum.</title>
        <authorList>
            <person name="Gloeckner G."/>
            <person name="Eichinger L."/>
            <person name="Szafranski K."/>
            <person name="Pachebat J.A."/>
            <person name="Bankier A.T."/>
            <person name="Dear P.H."/>
            <person name="Lehmann R."/>
            <person name="Baumgart C."/>
            <person name="Parra G."/>
            <person name="Abril J.F."/>
            <person name="Guigo R."/>
            <person name="Kumpf K."/>
            <person name="Tunggal B."/>
            <person name="Cox E.C."/>
            <person name="Quail M.A."/>
            <person name="Platzer M."/>
            <person name="Rosenthal A."/>
            <person name="Noegel A.A."/>
        </authorList>
    </citation>
    <scope>NUCLEOTIDE SEQUENCE [LARGE SCALE GENOMIC DNA]</scope>
    <source>
        <strain>AX4</strain>
    </source>
</reference>
<reference key="2">
    <citation type="journal article" date="2005" name="Nature">
        <title>The genome of the social amoeba Dictyostelium discoideum.</title>
        <authorList>
            <person name="Eichinger L."/>
            <person name="Pachebat J.A."/>
            <person name="Gloeckner G."/>
            <person name="Rajandream M.A."/>
            <person name="Sucgang R."/>
            <person name="Berriman M."/>
            <person name="Song J."/>
            <person name="Olsen R."/>
            <person name="Szafranski K."/>
            <person name="Xu Q."/>
            <person name="Tunggal B."/>
            <person name="Kummerfeld S."/>
            <person name="Madera M."/>
            <person name="Konfortov B.A."/>
            <person name="Rivero F."/>
            <person name="Bankier A.T."/>
            <person name="Lehmann R."/>
            <person name="Hamlin N."/>
            <person name="Davies R."/>
            <person name="Gaudet P."/>
            <person name="Fey P."/>
            <person name="Pilcher K."/>
            <person name="Chen G."/>
            <person name="Saunders D."/>
            <person name="Sodergren E.J."/>
            <person name="Davis P."/>
            <person name="Kerhornou A."/>
            <person name="Nie X."/>
            <person name="Hall N."/>
            <person name="Anjard C."/>
            <person name="Hemphill L."/>
            <person name="Bason N."/>
            <person name="Farbrother P."/>
            <person name="Desany B."/>
            <person name="Just E."/>
            <person name="Morio T."/>
            <person name="Rost R."/>
            <person name="Churcher C.M."/>
            <person name="Cooper J."/>
            <person name="Haydock S."/>
            <person name="van Driessche N."/>
            <person name="Cronin A."/>
            <person name="Goodhead I."/>
            <person name="Muzny D.M."/>
            <person name="Mourier T."/>
            <person name="Pain A."/>
            <person name="Lu M."/>
            <person name="Harper D."/>
            <person name="Lindsay R."/>
            <person name="Hauser H."/>
            <person name="James K.D."/>
            <person name="Quiles M."/>
            <person name="Madan Babu M."/>
            <person name="Saito T."/>
            <person name="Buchrieser C."/>
            <person name="Wardroper A."/>
            <person name="Felder M."/>
            <person name="Thangavelu M."/>
            <person name="Johnson D."/>
            <person name="Knights A."/>
            <person name="Loulseged H."/>
            <person name="Mungall K.L."/>
            <person name="Oliver K."/>
            <person name="Price C."/>
            <person name="Quail M.A."/>
            <person name="Urushihara H."/>
            <person name="Hernandez J."/>
            <person name="Rabbinowitsch E."/>
            <person name="Steffen D."/>
            <person name="Sanders M."/>
            <person name="Ma J."/>
            <person name="Kohara Y."/>
            <person name="Sharp S."/>
            <person name="Simmonds M.N."/>
            <person name="Spiegler S."/>
            <person name="Tivey A."/>
            <person name="Sugano S."/>
            <person name="White B."/>
            <person name="Walker D."/>
            <person name="Woodward J.R."/>
            <person name="Winckler T."/>
            <person name="Tanaka Y."/>
            <person name="Shaulsky G."/>
            <person name="Schleicher M."/>
            <person name="Weinstock G.M."/>
            <person name="Rosenthal A."/>
            <person name="Cox E.C."/>
            <person name="Chisholm R.L."/>
            <person name="Gibbs R.A."/>
            <person name="Loomis W.F."/>
            <person name="Platzer M."/>
            <person name="Kay R.R."/>
            <person name="Williams J.G."/>
            <person name="Dear P.H."/>
            <person name="Noegel A.A."/>
            <person name="Barrell B.G."/>
            <person name="Kuspa A."/>
        </authorList>
    </citation>
    <scope>NUCLEOTIDE SEQUENCE [LARGE SCALE GENOMIC DNA]</scope>
    <source>
        <strain>AX4</strain>
    </source>
</reference>
<accession>Q556G4</accession>
<accession>Q86K26</accession>
<proteinExistence type="inferred from homology"/>
<protein>
    <recommendedName>
        <fullName evidence="3">Deoxyhypusine hydroxylase</fullName>
        <shortName evidence="3">DOHH</shortName>
        <ecNumber evidence="2 3">1.14.99.29</ecNumber>
    </recommendedName>
    <alternativeName>
        <fullName evidence="3">Deoxyhypusine dioxygenase</fullName>
    </alternativeName>
    <alternativeName>
        <fullName evidence="3">Deoxyhypusine monooxygenase</fullName>
    </alternativeName>
</protein>
<keyword id="KW-0386">Hypusine biosynthesis</keyword>
<keyword id="KW-0408">Iron</keyword>
<keyword id="KW-0479">Metal-binding</keyword>
<keyword id="KW-0503">Monooxygenase</keyword>
<keyword id="KW-0560">Oxidoreductase</keyword>
<keyword id="KW-1185">Reference proteome</keyword>
<keyword id="KW-0677">Repeat</keyword>
<gene>
    <name type="primary">dohh-1</name>
    <name type="ORF">DDB_G0272634</name>
</gene>
<gene>
    <name type="primary">dohh-2</name>
    <name type="ORF">DDB_G0274079</name>
</gene>
<evidence type="ECO:0000250" key="1">
    <source>
        <dbReference type="UniProtKB" id="Q99LN9"/>
    </source>
</evidence>
<evidence type="ECO:0000250" key="2">
    <source>
        <dbReference type="UniProtKB" id="Q9BU89"/>
    </source>
</evidence>
<evidence type="ECO:0000255" key="3">
    <source>
        <dbReference type="HAMAP-Rule" id="MF_03101"/>
    </source>
</evidence>
<evidence type="ECO:0000305" key="4"/>
<comment type="function">
    <text evidence="1 3">Catalyzes the hydroxylation of the N(6)-(4-aminobutyl)-L-lysine intermediate produced by deoxyhypusine synthase/DHPS on a critical lysine of the eukaryotic translation initiation factor 5A/eIF-5A. This is the second step of the post-translational modification of that lysine into an unusual amino acid residue named hypusine. Hypusination is unique to mature eIF-5A factor and is essential for its function.</text>
</comment>
<comment type="catalytic activity">
    <reaction evidence="2 3">
        <text>[eIF5A protein]-deoxyhypusine + AH2 + O2 = [eIF5A protein]-hypusine + A + H2O</text>
        <dbReference type="Rhea" id="RHEA:14101"/>
        <dbReference type="Rhea" id="RHEA-COMP:10144"/>
        <dbReference type="Rhea" id="RHEA-COMP:12592"/>
        <dbReference type="ChEBI" id="CHEBI:13193"/>
        <dbReference type="ChEBI" id="CHEBI:15377"/>
        <dbReference type="ChEBI" id="CHEBI:15379"/>
        <dbReference type="ChEBI" id="CHEBI:17499"/>
        <dbReference type="ChEBI" id="CHEBI:82657"/>
        <dbReference type="ChEBI" id="CHEBI:91175"/>
        <dbReference type="EC" id="1.14.99.29"/>
    </reaction>
</comment>
<comment type="cofactor">
    <cofactor evidence="2 3">
        <name>Fe(2+)</name>
        <dbReference type="ChEBI" id="CHEBI:29033"/>
    </cofactor>
    <text evidence="2 3">Binds 2 Fe(2+) ions per subunit.</text>
</comment>
<comment type="pathway">
    <text evidence="2 3">Protein modification; eIF5A hypusination.</text>
</comment>
<comment type="similarity">
    <text evidence="3">Belongs to the deoxyhypusine hydroxylase family.</text>
</comment>
<comment type="caution">
    <text evidence="4">The gene for this protein is duplicated in strains AX3 and AX4. These strains contain a duplication of a segment of 750 kb of chromosome 2 compared to the corresponding sequence in strain AX2.</text>
</comment>
<organism>
    <name type="scientific">Dictyostelium discoideum</name>
    <name type="common">Social amoeba</name>
    <dbReference type="NCBI Taxonomy" id="44689"/>
    <lineage>
        <taxon>Eukaryota</taxon>
        <taxon>Amoebozoa</taxon>
        <taxon>Evosea</taxon>
        <taxon>Eumycetozoa</taxon>
        <taxon>Dictyostelia</taxon>
        <taxon>Dictyosteliales</taxon>
        <taxon>Dictyosteliaceae</taxon>
        <taxon>Dictyostelium</taxon>
    </lineage>
</organism>